<dbReference type="EC" id="2.4.99.17" evidence="1"/>
<dbReference type="EMBL" id="CP000653">
    <property type="protein sequence ID" value="ABP59558.1"/>
    <property type="molecule type" value="Genomic_DNA"/>
</dbReference>
<dbReference type="RefSeq" id="WP_012016279.1">
    <property type="nucleotide sequence ID" value="NC_009436.1"/>
</dbReference>
<dbReference type="SMR" id="A4W778"/>
<dbReference type="STRING" id="399742.Ent638_0874"/>
<dbReference type="KEGG" id="ent:Ent638_0874"/>
<dbReference type="eggNOG" id="COG0809">
    <property type="taxonomic scope" value="Bacteria"/>
</dbReference>
<dbReference type="HOGENOM" id="CLU_039110_1_0_6"/>
<dbReference type="OrthoDB" id="9805933at2"/>
<dbReference type="UniPathway" id="UPA00392"/>
<dbReference type="Proteomes" id="UP000000230">
    <property type="component" value="Chromosome"/>
</dbReference>
<dbReference type="GO" id="GO:0005737">
    <property type="term" value="C:cytoplasm"/>
    <property type="evidence" value="ECO:0007669"/>
    <property type="project" value="UniProtKB-SubCell"/>
</dbReference>
<dbReference type="GO" id="GO:0051075">
    <property type="term" value="F:S-adenosylmethionine:tRNA ribosyltransferase-isomerase activity"/>
    <property type="evidence" value="ECO:0007669"/>
    <property type="project" value="UniProtKB-EC"/>
</dbReference>
<dbReference type="GO" id="GO:0008616">
    <property type="term" value="P:queuosine biosynthetic process"/>
    <property type="evidence" value="ECO:0007669"/>
    <property type="project" value="UniProtKB-UniRule"/>
</dbReference>
<dbReference type="GO" id="GO:0002099">
    <property type="term" value="P:tRNA wobble guanine modification"/>
    <property type="evidence" value="ECO:0007669"/>
    <property type="project" value="TreeGrafter"/>
</dbReference>
<dbReference type="FunFam" id="2.40.10.240:FF:000001">
    <property type="entry name" value="S-adenosylmethionine:tRNA ribosyltransferase-isomerase"/>
    <property type="match status" value="1"/>
</dbReference>
<dbReference type="FunFam" id="3.40.1780.10:FF:000001">
    <property type="entry name" value="S-adenosylmethionine:tRNA ribosyltransferase-isomerase"/>
    <property type="match status" value="1"/>
</dbReference>
<dbReference type="Gene3D" id="2.40.10.240">
    <property type="entry name" value="QueA-like"/>
    <property type="match status" value="1"/>
</dbReference>
<dbReference type="Gene3D" id="3.40.1780.10">
    <property type="entry name" value="QueA-like"/>
    <property type="match status" value="1"/>
</dbReference>
<dbReference type="HAMAP" id="MF_00113">
    <property type="entry name" value="QueA"/>
    <property type="match status" value="1"/>
</dbReference>
<dbReference type="InterPro" id="IPR003699">
    <property type="entry name" value="QueA"/>
</dbReference>
<dbReference type="InterPro" id="IPR042118">
    <property type="entry name" value="QueA_dom1"/>
</dbReference>
<dbReference type="InterPro" id="IPR042119">
    <property type="entry name" value="QueA_dom2"/>
</dbReference>
<dbReference type="InterPro" id="IPR036100">
    <property type="entry name" value="QueA_sf"/>
</dbReference>
<dbReference type="NCBIfam" id="NF001140">
    <property type="entry name" value="PRK00147.1"/>
    <property type="match status" value="1"/>
</dbReference>
<dbReference type="NCBIfam" id="TIGR00113">
    <property type="entry name" value="queA"/>
    <property type="match status" value="1"/>
</dbReference>
<dbReference type="PANTHER" id="PTHR30307">
    <property type="entry name" value="S-ADENOSYLMETHIONINE:TRNA RIBOSYLTRANSFERASE-ISOMERASE"/>
    <property type="match status" value="1"/>
</dbReference>
<dbReference type="PANTHER" id="PTHR30307:SF0">
    <property type="entry name" value="S-ADENOSYLMETHIONINE:TRNA RIBOSYLTRANSFERASE-ISOMERASE"/>
    <property type="match status" value="1"/>
</dbReference>
<dbReference type="Pfam" id="PF02547">
    <property type="entry name" value="Queuosine_synth"/>
    <property type="match status" value="1"/>
</dbReference>
<dbReference type="SUPFAM" id="SSF111337">
    <property type="entry name" value="QueA-like"/>
    <property type="match status" value="1"/>
</dbReference>
<reference key="1">
    <citation type="journal article" date="2010" name="PLoS Genet.">
        <title>Genome sequence of the plant growth promoting endophytic bacterium Enterobacter sp. 638.</title>
        <authorList>
            <person name="Taghavi S."/>
            <person name="van der Lelie D."/>
            <person name="Hoffman A."/>
            <person name="Zhang Y.B."/>
            <person name="Walla M.D."/>
            <person name="Vangronsveld J."/>
            <person name="Newman L."/>
            <person name="Monchy S."/>
        </authorList>
    </citation>
    <scope>NUCLEOTIDE SEQUENCE [LARGE SCALE GENOMIC DNA]</scope>
    <source>
        <strain>638</strain>
    </source>
</reference>
<name>QUEA_ENT38</name>
<evidence type="ECO:0000255" key="1">
    <source>
        <dbReference type="HAMAP-Rule" id="MF_00113"/>
    </source>
</evidence>
<sequence length="356" mass="39380">MRVADFSFELPESLIAHYPQPERSGCRLLSLDGPTGALTHGTFTDLLDKLNPGDLLVFNNTRVIPARLFGRKASGGKIEVLVERMLDDKRILAHIRASKAPKPGAELLLGDDESINATMVARHDALFEVEFNDARPVLDILNAIGHMPLPPYIDRPDEDADRELYQTVYSQKPGAVAAPTAGLHFDEPLLERLREKGIEMAFVTLHVGAGTFQPVRVDTIEDHIMHSEYAEVPQDVVDAVLAAKARGNRVIAVGTTSVRSLESAAQAAKKDLIEPFFGDTKIFIYPGYQYTVIDALVTNFHLPESTLIMLVSAFAGYQNTMNAYKAAVEQNYRFFSYGDAMFITYNPQALNERVGE</sequence>
<accession>A4W778</accession>
<comment type="function">
    <text evidence="1">Transfers and isomerizes the ribose moiety from AdoMet to the 7-aminomethyl group of 7-deazaguanine (preQ1-tRNA) to give epoxyqueuosine (oQ-tRNA).</text>
</comment>
<comment type="catalytic activity">
    <reaction evidence="1">
        <text>7-aminomethyl-7-carbaguanosine(34) in tRNA + S-adenosyl-L-methionine = epoxyqueuosine(34) in tRNA + adenine + L-methionine + 2 H(+)</text>
        <dbReference type="Rhea" id="RHEA:32155"/>
        <dbReference type="Rhea" id="RHEA-COMP:10342"/>
        <dbReference type="Rhea" id="RHEA-COMP:18582"/>
        <dbReference type="ChEBI" id="CHEBI:15378"/>
        <dbReference type="ChEBI" id="CHEBI:16708"/>
        <dbReference type="ChEBI" id="CHEBI:57844"/>
        <dbReference type="ChEBI" id="CHEBI:59789"/>
        <dbReference type="ChEBI" id="CHEBI:82833"/>
        <dbReference type="ChEBI" id="CHEBI:194443"/>
        <dbReference type="EC" id="2.4.99.17"/>
    </reaction>
</comment>
<comment type="pathway">
    <text evidence="1">tRNA modification; tRNA-queuosine biosynthesis.</text>
</comment>
<comment type="subunit">
    <text evidence="1">Monomer.</text>
</comment>
<comment type="subcellular location">
    <subcellularLocation>
        <location evidence="1">Cytoplasm</location>
    </subcellularLocation>
</comment>
<comment type="similarity">
    <text evidence="1">Belongs to the QueA family.</text>
</comment>
<protein>
    <recommendedName>
        <fullName evidence="1">S-adenosylmethionine:tRNA ribosyltransferase-isomerase</fullName>
        <ecNumber evidence="1">2.4.99.17</ecNumber>
    </recommendedName>
    <alternativeName>
        <fullName evidence="1">Queuosine biosynthesis protein QueA</fullName>
    </alternativeName>
</protein>
<proteinExistence type="inferred from homology"/>
<feature type="chain" id="PRO_1000057741" description="S-adenosylmethionine:tRNA ribosyltransferase-isomerase">
    <location>
        <begin position="1"/>
        <end position="356"/>
    </location>
</feature>
<organism>
    <name type="scientific">Enterobacter sp. (strain 638)</name>
    <dbReference type="NCBI Taxonomy" id="399742"/>
    <lineage>
        <taxon>Bacteria</taxon>
        <taxon>Pseudomonadati</taxon>
        <taxon>Pseudomonadota</taxon>
        <taxon>Gammaproteobacteria</taxon>
        <taxon>Enterobacterales</taxon>
        <taxon>Enterobacteriaceae</taxon>
        <taxon>Enterobacter</taxon>
    </lineage>
</organism>
<gene>
    <name evidence="1" type="primary">queA</name>
    <name type="ordered locus">Ent638_0874</name>
</gene>
<keyword id="KW-0963">Cytoplasm</keyword>
<keyword id="KW-0671">Queuosine biosynthesis</keyword>
<keyword id="KW-0949">S-adenosyl-L-methionine</keyword>
<keyword id="KW-0808">Transferase</keyword>